<dbReference type="EC" id="2.3.1.234" evidence="1"/>
<dbReference type="EMBL" id="CP000494">
    <property type="protein sequence ID" value="ABQ32582.1"/>
    <property type="molecule type" value="Genomic_DNA"/>
</dbReference>
<dbReference type="RefSeq" id="WP_012040638.1">
    <property type="nucleotide sequence ID" value="NC_009485.1"/>
</dbReference>
<dbReference type="SMR" id="A5E8T8"/>
<dbReference type="STRING" id="288000.BBta_0289"/>
<dbReference type="KEGG" id="bbt:BBta_0289"/>
<dbReference type="eggNOG" id="COG0533">
    <property type="taxonomic scope" value="Bacteria"/>
</dbReference>
<dbReference type="HOGENOM" id="CLU_023208_0_2_5"/>
<dbReference type="OrthoDB" id="9806197at2"/>
<dbReference type="Proteomes" id="UP000000246">
    <property type="component" value="Chromosome"/>
</dbReference>
<dbReference type="GO" id="GO:0005737">
    <property type="term" value="C:cytoplasm"/>
    <property type="evidence" value="ECO:0007669"/>
    <property type="project" value="UniProtKB-SubCell"/>
</dbReference>
<dbReference type="GO" id="GO:0005506">
    <property type="term" value="F:iron ion binding"/>
    <property type="evidence" value="ECO:0007669"/>
    <property type="project" value="UniProtKB-UniRule"/>
</dbReference>
<dbReference type="GO" id="GO:0061711">
    <property type="term" value="F:N(6)-L-threonylcarbamoyladenine synthase activity"/>
    <property type="evidence" value="ECO:0007669"/>
    <property type="project" value="UniProtKB-EC"/>
</dbReference>
<dbReference type="GO" id="GO:0002949">
    <property type="term" value="P:tRNA threonylcarbamoyladenosine modification"/>
    <property type="evidence" value="ECO:0007669"/>
    <property type="project" value="UniProtKB-UniRule"/>
</dbReference>
<dbReference type="CDD" id="cd24133">
    <property type="entry name" value="ASKHA_NBD_TsaD_bac"/>
    <property type="match status" value="1"/>
</dbReference>
<dbReference type="FunFam" id="3.30.420.40:FF:000012">
    <property type="entry name" value="tRNA N6-adenosine threonylcarbamoyltransferase"/>
    <property type="match status" value="1"/>
</dbReference>
<dbReference type="Gene3D" id="3.30.420.40">
    <property type="match status" value="2"/>
</dbReference>
<dbReference type="HAMAP" id="MF_01445">
    <property type="entry name" value="TsaD"/>
    <property type="match status" value="1"/>
</dbReference>
<dbReference type="InterPro" id="IPR043129">
    <property type="entry name" value="ATPase_NBD"/>
</dbReference>
<dbReference type="InterPro" id="IPR000905">
    <property type="entry name" value="Gcp-like_dom"/>
</dbReference>
<dbReference type="InterPro" id="IPR017861">
    <property type="entry name" value="KAE1/TsaD"/>
</dbReference>
<dbReference type="InterPro" id="IPR017860">
    <property type="entry name" value="Peptidase_M22_CS"/>
</dbReference>
<dbReference type="InterPro" id="IPR022450">
    <property type="entry name" value="TsaD"/>
</dbReference>
<dbReference type="NCBIfam" id="TIGR00329">
    <property type="entry name" value="gcp_kae1"/>
    <property type="match status" value="1"/>
</dbReference>
<dbReference type="NCBIfam" id="TIGR03723">
    <property type="entry name" value="T6A_TsaD_YgjD"/>
    <property type="match status" value="1"/>
</dbReference>
<dbReference type="PANTHER" id="PTHR11735">
    <property type="entry name" value="TRNA N6-ADENOSINE THREONYLCARBAMOYLTRANSFERASE"/>
    <property type="match status" value="1"/>
</dbReference>
<dbReference type="PANTHER" id="PTHR11735:SF6">
    <property type="entry name" value="TRNA N6-ADENOSINE THREONYLCARBAMOYLTRANSFERASE, MITOCHONDRIAL"/>
    <property type="match status" value="1"/>
</dbReference>
<dbReference type="Pfam" id="PF00814">
    <property type="entry name" value="TsaD"/>
    <property type="match status" value="1"/>
</dbReference>
<dbReference type="PRINTS" id="PR00789">
    <property type="entry name" value="OSIALOPTASE"/>
</dbReference>
<dbReference type="SUPFAM" id="SSF53067">
    <property type="entry name" value="Actin-like ATPase domain"/>
    <property type="match status" value="2"/>
</dbReference>
<dbReference type="PROSITE" id="PS01016">
    <property type="entry name" value="GLYCOPROTEASE"/>
    <property type="match status" value="1"/>
</dbReference>
<name>TSAD_BRASB</name>
<protein>
    <recommendedName>
        <fullName evidence="1">tRNA N6-adenosine threonylcarbamoyltransferase</fullName>
        <ecNumber evidence="1">2.3.1.234</ecNumber>
    </recommendedName>
    <alternativeName>
        <fullName evidence="1">N6-L-threonylcarbamoyladenine synthase</fullName>
        <shortName evidence="1">t(6)A synthase</shortName>
    </alternativeName>
    <alternativeName>
        <fullName evidence="1">t(6)A37 threonylcarbamoyladenosine biosynthesis protein TsaD</fullName>
    </alternativeName>
    <alternativeName>
        <fullName evidence="1">tRNA threonylcarbamoyladenosine biosynthesis protein TsaD</fullName>
    </alternativeName>
</protein>
<evidence type="ECO:0000255" key="1">
    <source>
        <dbReference type="HAMAP-Rule" id="MF_01445"/>
    </source>
</evidence>
<gene>
    <name evidence="1" type="primary">tsaD</name>
    <name type="synonym">gcp</name>
    <name type="ordered locus">BBta_0289</name>
</gene>
<feature type="chain" id="PRO_0000303291" description="tRNA N6-adenosine threonylcarbamoyltransferase">
    <location>
        <begin position="1"/>
        <end position="355"/>
    </location>
</feature>
<feature type="binding site" evidence="1">
    <location>
        <position position="113"/>
    </location>
    <ligand>
        <name>Fe cation</name>
        <dbReference type="ChEBI" id="CHEBI:24875"/>
    </ligand>
</feature>
<feature type="binding site" evidence="1">
    <location>
        <position position="117"/>
    </location>
    <ligand>
        <name>Fe cation</name>
        <dbReference type="ChEBI" id="CHEBI:24875"/>
    </ligand>
</feature>
<feature type="binding site" evidence="1">
    <location>
        <begin position="135"/>
        <end position="139"/>
    </location>
    <ligand>
        <name>substrate</name>
    </ligand>
</feature>
<feature type="binding site" evidence="1">
    <location>
        <position position="168"/>
    </location>
    <ligand>
        <name>substrate</name>
    </ligand>
</feature>
<feature type="binding site" evidence="1">
    <location>
        <position position="181"/>
    </location>
    <ligand>
        <name>substrate</name>
    </ligand>
</feature>
<feature type="binding site" evidence="1">
    <location>
        <position position="279"/>
    </location>
    <ligand>
        <name>substrate</name>
    </ligand>
</feature>
<feature type="binding site" evidence="1">
    <location>
        <position position="307"/>
    </location>
    <ligand>
        <name>Fe cation</name>
        <dbReference type="ChEBI" id="CHEBI:24875"/>
    </ligand>
</feature>
<reference key="1">
    <citation type="journal article" date="2007" name="Science">
        <title>Legumes symbioses: absence of nod genes in photosynthetic bradyrhizobia.</title>
        <authorList>
            <person name="Giraud E."/>
            <person name="Moulin L."/>
            <person name="Vallenet D."/>
            <person name="Barbe V."/>
            <person name="Cytryn E."/>
            <person name="Avarre J.-C."/>
            <person name="Jaubert M."/>
            <person name="Simon D."/>
            <person name="Cartieaux F."/>
            <person name="Prin Y."/>
            <person name="Bena G."/>
            <person name="Hannibal L."/>
            <person name="Fardoux J."/>
            <person name="Kojadinovic M."/>
            <person name="Vuillet L."/>
            <person name="Lajus A."/>
            <person name="Cruveiller S."/>
            <person name="Rouy Z."/>
            <person name="Mangenot S."/>
            <person name="Segurens B."/>
            <person name="Dossat C."/>
            <person name="Franck W.L."/>
            <person name="Chang W.-S."/>
            <person name="Saunders E."/>
            <person name="Bruce D."/>
            <person name="Richardson P."/>
            <person name="Normand P."/>
            <person name="Dreyfus B."/>
            <person name="Pignol D."/>
            <person name="Stacey G."/>
            <person name="Emerich D."/>
            <person name="Vermeglio A."/>
            <person name="Medigue C."/>
            <person name="Sadowsky M."/>
        </authorList>
    </citation>
    <scope>NUCLEOTIDE SEQUENCE [LARGE SCALE GENOMIC DNA]</scope>
    <source>
        <strain>BTAi1 / ATCC BAA-1182</strain>
    </source>
</reference>
<proteinExistence type="inferred from homology"/>
<organism>
    <name type="scientific">Bradyrhizobium sp. (strain BTAi1 / ATCC BAA-1182)</name>
    <dbReference type="NCBI Taxonomy" id="288000"/>
    <lineage>
        <taxon>Bacteria</taxon>
        <taxon>Pseudomonadati</taxon>
        <taxon>Pseudomonadota</taxon>
        <taxon>Alphaproteobacteria</taxon>
        <taxon>Hyphomicrobiales</taxon>
        <taxon>Nitrobacteraceae</taxon>
        <taxon>Bradyrhizobium</taxon>
    </lineage>
</organism>
<comment type="function">
    <text evidence="1">Required for the formation of a threonylcarbamoyl group on adenosine at position 37 (t(6)A37) in tRNAs that read codons beginning with adenine. Is involved in the transfer of the threonylcarbamoyl moiety of threonylcarbamoyl-AMP (TC-AMP) to the N6 group of A37, together with TsaE and TsaB. TsaD likely plays a direct catalytic role in this reaction.</text>
</comment>
<comment type="catalytic activity">
    <reaction evidence="1">
        <text>L-threonylcarbamoyladenylate + adenosine(37) in tRNA = N(6)-L-threonylcarbamoyladenosine(37) in tRNA + AMP + H(+)</text>
        <dbReference type="Rhea" id="RHEA:37059"/>
        <dbReference type="Rhea" id="RHEA-COMP:10162"/>
        <dbReference type="Rhea" id="RHEA-COMP:10163"/>
        <dbReference type="ChEBI" id="CHEBI:15378"/>
        <dbReference type="ChEBI" id="CHEBI:73682"/>
        <dbReference type="ChEBI" id="CHEBI:74411"/>
        <dbReference type="ChEBI" id="CHEBI:74418"/>
        <dbReference type="ChEBI" id="CHEBI:456215"/>
        <dbReference type="EC" id="2.3.1.234"/>
    </reaction>
</comment>
<comment type="cofactor">
    <cofactor evidence="1">
        <name>Fe(2+)</name>
        <dbReference type="ChEBI" id="CHEBI:29033"/>
    </cofactor>
    <text evidence="1">Binds 1 Fe(2+) ion per subunit.</text>
</comment>
<comment type="subcellular location">
    <subcellularLocation>
        <location evidence="1">Cytoplasm</location>
    </subcellularLocation>
</comment>
<comment type="similarity">
    <text evidence="1">Belongs to the KAE1 / TsaD family.</text>
</comment>
<accession>A5E8T8</accession>
<keyword id="KW-0012">Acyltransferase</keyword>
<keyword id="KW-0963">Cytoplasm</keyword>
<keyword id="KW-0408">Iron</keyword>
<keyword id="KW-0479">Metal-binding</keyword>
<keyword id="KW-1185">Reference proteome</keyword>
<keyword id="KW-0808">Transferase</keyword>
<keyword id="KW-0819">tRNA processing</keyword>
<sequence length="355" mass="36811">MLGIETTCDETAAAVVARDSDGKGRILSNVVRSQTDEHALYGGVVPEIAARAHVDMLDHLIDAAMREAGIDYADLNGVAAAAGPGLIGGVIVGLTTAKAIALVHDTPLIAVNHLEAHALTPRLTDAIDFPYCLFLASGGHTQIVAVAGVGDYVRLGTTVDDAMGEAFDKVAKMLGLPYPGGPQVEEAAQRGDAARFAFPRPMLGRSDANFSLSGLKTAVRNEIGRIAHVSAQDIADLCASFQAAVLESTADRLRVGLDLFKQRFGAPTALVAAGGVAANQAIRAALDDVAQQAGTRLIMPPPALCTDNGAMIAWAGLERLALGMIDGMDAAPRARWLLDANASVPGKFANTRAGF</sequence>